<comment type="function">
    <text evidence="1">Required for the insertion and/or proper folding and/or complex formation of integral membrane proteins into the membrane. Involved in integration of membrane proteins that insert both dependently and independently of the Sec translocase complex, as well as at least some lipoproteins. Aids folding of multispanning membrane proteins (By similarity).</text>
</comment>
<comment type="subunit">
    <text evidence="1">Interacts with the Sec translocase complex via SecD. Specifically interacts with transmembrane segments of nascent integral membrane proteins during membrane integration (By similarity).</text>
</comment>
<comment type="subcellular location">
    <subcellularLocation>
        <location evidence="1">Cell membrane</location>
        <topology evidence="1">Multi-pass membrane protein</topology>
    </subcellularLocation>
</comment>
<comment type="similarity">
    <text evidence="3">Belongs to the OXA1/ALB3/YidC family. Type 1 subfamily.</text>
</comment>
<keyword id="KW-1003">Cell membrane</keyword>
<keyword id="KW-0143">Chaperone</keyword>
<keyword id="KW-0472">Membrane</keyword>
<keyword id="KW-0653">Protein transport</keyword>
<keyword id="KW-0812">Transmembrane</keyword>
<keyword id="KW-1133">Transmembrane helix</keyword>
<keyword id="KW-0813">Transport</keyword>
<proteinExistence type="inferred from homology"/>
<protein>
    <recommendedName>
        <fullName>Membrane protein insertase YidC</fullName>
    </recommendedName>
    <alternativeName>
        <fullName>Foldase YidC</fullName>
    </alternativeName>
    <alternativeName>
        <fullName>Membrane integrase YidC</fullName>
    </alternativeName>
    <alternativeName>
        <fullName>Membrane protein YidC</fullName>
    </alternativeName>
</protein>
<accession>O51829</accession>
<reference key="1">
    <citation type="journal article" date="1998" name="J. Virol.">
        <title>Potato leafroll virus binds to the equatorial domain of the aphid endosymbiotic GroEL homolog.</title>
        <authorList>
            <person name="Hogenhout S.A."/>
            <person name="van der Wilk F."/>
            <person name="Verbeek M."/>
            <person name="Goldbach R.W."/>
            <person name="van den Heuvel J.F.J.M."/>
        </authorList>
    </citation>
    <scope>NUCLEOTIDE SEQUENCE [GENOMIC DNA]</scope>
</reference>
<sequence>SRTLIKSKLWVGPEIQKEMKLVAPNLDLTVDYGWLWFLSQPLFKLLTIINSIINNWGFSIILITFIMKIITYPLTKSQYVSMSKIRALQPKIKEIKEAFSDNKQRISQEMIILYKKEKINPLGGFLPVFIQMPVFLSLYYMLIGSVELRHAPFVLWIKDLSSQDPFYVLPIIMGLTMFFIQKTSSNNISDPIQKKIMNFMPVIFTVFFLWFPSGLVLYYIVSNLVTIIQQKFIFSNFKSN</sequence>
<name>YIDC_BUCMP</name>
<organism>
    <name type="scientific">Buchnera aphidicola subsp. Myzus persicae</name>
    <name type="common">Myzus persicae primary endosymbiont</name>
    <dbReference type="NCBI Taxonomy" id="98795"/>
    <lineage>
        <taxon>Bacteria</taxon>
        <taxon>Pseudomonadati</taxon>
        <taxon>Pseudomonadota</taxon>
        <taxon>Gammaproteobacteria</taxon>
        <taxon>Enterobacterales</taxon>
        <taxon>Erwiniaceae</taxon>
        <taxon>Buchnera</taxon>
    </lineage>
</organism>
<dbReference type="EMBL" id="AF003957">
    <property type="protein sequence ID" value="AAC04234.1"/>
    <property type="molecule type" value="Genomic_DNA"/>
</dbReference>
<dbReference type="SMR" id="O51829"/>
<dbReference type="GO" id="GO:0005886">
    <property type="term" value="C:plasma membrane"/>
    <property type="evidence" value="ECO:0007669"/>
    <property type="project" value="UniProtKB-SubCell"/>
</dbReference>
<dbReference type="GO" id="GO:0032977">
    <property type="term" value="F:membrane insertase activity"/>
    <property type="evidence" value="ECO:0007669"/>
    <property type="project" value="InterPro"/>
</dbReference>
<dbReference type="GO" id="GO:0051205">
    <property type="term" value="P:protein insertion into membrane"/>
    <property type="evidence" value="ECO:0007669"/>
    <property type="project" value="TreeGrafter"/>
</dbReference>
<dbReference type="GO" id="GO:0015031">
    <property type="term" value="P:protein transport"/>
    <property type="evidence" value="ECO:0007669"/>
    <property type="project" value="UniProtKB-KW"/>
</dbReference>
<dbReference type="CDD" id="cd20070">
    <property type="entry name" value="5TM_YidC_Alb3"/>
    <property type="match status" value="1"/>
</dbReference>
<dbReference type="InterPro" id="IPR028053">
    <property type="entry name" value="Membr_insert_YidC_N"/>
</dbReference>
<dbReference type="InterPro" id="IPR001708">
    <property type="entry name" value="YidC/ALB3/OXA1/COX18"/>
</dbReference>
<dbReference type="InterPro" id="IPR028055">
    <property type="entry name" value="YidC/Oxa/ALB_C"/>
</dbReference>
<dbReference type="InterPro" id="IPR047196">
    <property type="entry name" value="YidC_ALB_C"/>
</dbReference>
<dbReference type="NCBIfam" id="TIGR03593">
    <property type="entry name" value="yidC_nterm"/>
    <property type="match status" value="1"/>
</dbReference>
<dbReference type="NCBIfam" id="TIGR03592">
    <property type="entry name" value="yidC_oxa1_cterm"/>
    <property type="match status" value="1"/>
</dbReference>
<dbReference type="PANTHER" id="PTHR12428:SF65">
    <property type="entry name" value="CYTOCHROME C OXIDASE ASSEMBLY PROTEIN COX18, MITOCHONDRIAL"/>
    <property type="match status" value="1"/>
</dbReference>
<dbReference type="PANTHER" id="PTHR12428">
    <property type="entry name" value="OXA1"/>
    <property type="match status" value="1"/>
</dbReference>
<dbReference type="Pfam" id="PF02096">
    <property type="entry name" value="60KD_IMP"/>
    <property type="match status" value="1"/>
</dbReference>
<dbReference type="Pfam" id="PF14849">
    <property type="entry name" value="YidC_periplas"/>
    <property type="match status" value="1"/>
</dbReference>
<dbReference type="PRINTS" id="PR00701">
    <property type="entry name" value="60KDINNERMP"/>
</dbReference>
<dbReference type="PRINTS" id="PR01900">
    <property type="entry name" value="YIDCPROTEIN"/>
</dbReference>
<feature type="chain" id="PRO_0000124699" description="Membrane protein insertase YidC">
    <location>
        <begin position="1" status="less than"/>
        <end position="240"/>
    </location>
</feature>
<feature type="transmembrane region" description="Helical" evidence="2">
    <location>
        <begin position="46"/>
        <end position="66"/>
    </location>
</feature>
<feature type="transmembrane region" description="Helical" evidence="2">
    <location>
        <begin position="123"/>
        <end position="143"/>
    </location>
</feature>
<feature type="transmembrane region" description="Helical" evidence="2">
    <location>
        <begin position="160"/>
        <end position="180"/>
    </location>
</feature>
<feature type="transmembrane region" description="Helical" evidence="2">
    <location>
        <begin position="201"/>
        <end position="221"/>
    </location>
</feature>
<feature type="non-terminal residue">
    <location>
        <position position="1"/>
    </location>
</feature>
<evidence type="ECO:0000250" key="1"/>
<evidence type="ECO:0000255" key="2"/>
<evidence type="ECO:0000305" key="3"/>
<gene>
    <name type="primary">yidC</name>
</gene>